<evidence type="ECO:0000255" key="1">
    <source>
        <dbReference type="HAMAP-Rule" id="MF_03029"/>
    </source>
</evidence>
<evidence type="ECO:0000256" key="2">
    <source>
        <dbReference type="SAM" id="MobiDB-lite"/>
    </source>
</evidence>
<evidence type="ECO:0000305" key="3"/>
<reference key="1">
    <citation type="journal article" date="2008" name="Genome Biol.">
        <title>The genome sequence of the model ascomycete fungus Podospora anserina.</title>
        <authorList>
            <person name="Espagne E."/>
            <person name="Lespinet O."/>
            <person name="Malagnac F."/>
            <person name="Da Silva C."/>
            <person name="Jaillon O."/>
            <person name="Porcel B.M."/>
            <person name="Couloux A."/>
            <person name="Aury J.-M."/>
            <person name="Segurens B."/>
            <person name="Poulain J."/>
            <person name="Anthouard V."/>
            <person name="Grossetete S."/>
            <person name="Khalili H."/>
            <person name="Coppin E."/>
            <person name="Dequard-Chablat M."/>
            <person name="Picard M."/>
            <person name="Contamine V."/>
            <person name="Arnaise S."/>
            <person name="Bourdais A."/>
            <person name="Berteaux-Lecellier V."/>
            <person name="Gautheret D."/>
            <person name="de Vries R.P."/>
            <person name="Battaglia E."/>
            <person name="Coutinho P.M."/>
            <person name="Danchin E.G.J."/>
            <person name="Henrissat B."/>
            <person name="El Khoury R."/>
            <person name="Sainsard-Chanet A."/>
            <person name="Boivin A."/>
            <person name="Pinan-Lucarre B."/>
            <person name="Sellem C.H."/>
            <person name="Debuchy R."/>
            <person name="Wincker P."/>
            <person name="Weissenbach J."/>
            <person name="Silar P."/>
        </authorList>
    </citation>
    <scope>NUCLEOTIDE SEQUENCE [LARGE SCALE GENOMIC DNA]</scope>
    <source>
        <strain>S / ATCC MYA-4624 / DSM 980 / FGSC 10383</strain>
    </source>
</reference>
<reference key="2">
    <citation type="journal article" date="2014" name="Genetics">
        <title>Maintaining two mating types: Structure of the mating type locus and its role in heterokaryosis in Podospora anserina.</title>
        <authorList>
            <person name="Grognet P."/>
            <person name="Bidard F."/>
            <person name="Kuchly C."/>
            <person name="Tong L.C.H."/>
            <person name="Coppin E."/>
            <person name="Benkhali J.A."/>
            <person name="Couloux A."/>
            <person name="Wincker P."/>
            <person name="Debuchy R."/>
            <person name="Silar P."/>
        </authorList>
    </citation>
    <scope>GENOME REANNOTATION</scope>
    <source>
        <strain>S / ATCC MYA-4624 / DSM 980 / FGSC 10383</strain>
    </source>
</reference>
<protein>
    <recommendedName>
        <fullName evidence="1">Ribosome biogenesis protein YTM1</fullName>
    </recommendedName>
</protein>
<sequence length="487" mass="52098">MDEPMNDAPGAQVKVTFTTNEADLQLPEEKRQLLVPADIRRYGLSRILNSDLMLDSGSIPFDFLVNGSFLRSSLEDYLNSEGLSLETNLTLQYVRSLIPPVFEASFEHDDWVSSVDALTATSPAGRWSGENFSRGQERILSASYDGLLRIWNASGEVLVTAPSASHGGHSASIKAAKFISSTQIASTGMDRSVRVWKYTDPGASGQAELKPTLELYGHRASVDSLEVHGPSKRILTASADGSVALWSASKSSSPEADASLLPNAHTSKRRKVASSVTTPQRGPLFLMQIHNAPATAAVFDPRDHTVGYSVSQDHTVKTLDLTTGSVVANLTLSHSLLSLCAIPRPNGAPLLAVGTSARHITLVDPRASAATTSVMTLRGHTNKVVALAANPENEYSLVSGSHDGTCRIWDLRSVRPASGGESEGGVGGNVSEPVYVFERESRQGKKKSVAGEGAKVFGVVWDRELGILSGGEDKKVQVNRGRDVVRE</sequence>
<comment type="function">
    <text evidence="1">Component of the NOP7 complex, which is required for maturation of the 25S and 5.8S ribosomal RNAs and formation of the 60S ribosome.</text>
</comment>
<comment type="subunit">
    <text evidence="1">Component of the NOP7 complex, composed of ERB1, NOP7 and YTM1. The complex is held together by ERB1, which interacts with NOP7 via its N-terminal domain and with YTM1 via a high-affinity interaction between the seven-bladed beta-propeller domains of the 2 proteins. The NOP7 complex associates with the 66S pre-ribosome. Interacts (via UBL domain) with MDN1 (via VWFA/MIDAS domain).</text>
</comment>
<comment type="subcellular location">
    <subcellularLocation>
        <location evidence="1">Nucleus</location>
        <location evidence="1">Nucleolus</location>
    </subcellularLocation>
    <subcellularLocation>
        <location evidence="1">Nucleus</location>
        <location evidence="1">Nucleoplasm</location>
    </subcellularLocation>
</comment>
<comment type="similarity">
    <text evidence="1">Belongs to the WD repeat WDR12/YTM1 family.</text>
</comment>
<name>YTM1_PODAN</name>
<dbReference type="EMBL" id="CU640366">
    <property type="protein sequence ID" value="CAP73175.1"/>
    <property type="molecule type" value="Genomic_DNA"/>
</dbReference>
<dbReference type="EMBL" id="FO904937">
    <property type="protein sequence ID" value="CDP25578.1"/>
    <property type="molecule type" value="Genomic_DNA"/>
</dbReference>
<dbReference type="RefSeq" id="XP_001911350.1">
    <property type="nucleotide sequence ID" value="XM_001911315.1"/>
</dbReference>
<dbReference type="SMR" id="B2B5V0"/>
<dbReference type="FunCoup" id="B2B5V0">
    <property type="interactions" value="873"/>
</dbReference>
<dbReference type="STRING" id="515849.B2B5V0"/>
<dbReference type="GeneID" id="6195422"/>
<dbReference type="KEGG" id="pan:PODANSg8392"/>
<dbReference type="eggNOG" id="KOG0313">
    <property type="taxonomic scope" value="Eukaryota"/>
</dbReference>
<dbReference type="HOGENOM" id="CLU_000288_57_0_1"/>
<dbReference type="InParanoid" id="B2B5V0"/>
<dbReference type="OrthoDB" id="10251381at2759"/>
<dbReference type="Proteomes" id="UP000001197">
    <property type="component" value="Chromosome 2"/>
</dbReference>
<dbReference type="GO" id="GO:0005654">
    <property type="term" value="C:nucleoplasm"/>
    <property type="evidence" value="ECO:0007669"/>
    <property type="project" value="UniProtKB-SubCell"/>
</dbReference>
<dbReference type="GO" id="GO:0070545">
    <property type="term" value="C:PeBoW complex"/>
    <property type="evidence" value="ECO:0007669"/>
    <property type="project" value="TreeGrafter"/>
</dbReference>
<dbReference type="GO" id="GO:0030687">
    <property type="term" value="C:preribosome, large subunit precursor"/>
    <property type="evidence" value="ECO:0007669"/>
    <property type="project" value="UniProtKB-UniRule"/>
</dbReference>
<dbReference type="GO" id="GO:0043021">
    <property type="term" value="F:ribonucleoprotein complex binding"/>
    <property type="evidence" value="ECO:0007669"/>
    <property type="project" value="UniProtKB-UniRule"/>
</dbReference>
<dbReference type="GO" id="GO:0000466">
    <property type="term" value="P:maturation of 5.8S rRNA from tricistronic rRNA transcript (SSU-rRNA, 5.8S rRNA, LSU-rRNA)"/>
    <property type="evidence" value="ECO:0007669"/>
    <property type="project" value="UniProtKB-UniRule"/>
</dbReference>
<dbReference type="GO" id="GO:0000463">
    <property type="term" value="P:maturation of LSU-rRNA from tricistronic rRNA transcript (SSU-rRNA, 5.8S rRNA, LSU-rRNA)"/>
    <property type="evidence" value="ECO:0007669"/>
    <property type="project" value="UniProtKB-UniRule"/>
</dbReference>
<dbReference type="CDD" id="cd00200">
    <property type="entry name" value="WD40"/>
    <property type="match status" value="1"/>
</dbReference>
<dbReference type="FunFam" id="2.130.10.10:FF:000593">
    <property type="entry name" value="Ribosome biogenesis protein ytm1"/>
    <property type="match status" value="1"/>
</dbReference>
<dbReference type="Gene3D" id="2.130.10.10">
    <property type="entry name" value="YVTN repeat-like/Quinoprotein amine dehydrogenase"/>
    <property type="match status" value="1"/>
</dbReference>
<dbReference type="HAMAP" id="MF_03029">
    <property type="entry name" value="WDR12"/>
    <property type="match status" value="1"/>
</dbReference>
<dbReference type="InterPro" id="IPR020472">
    <property type="entry name" value="G-protein_beta_WD-40_rep"/>
</dbReference>
<dbReference type="InterPro" id="IPR012972">
    <property type="entry name" value="NLE"/>
</dbReference>
<dbReference type="InterPro" id="IPR015943">
    <property type="entry name" value="WD40/YVTN_repeat-like_dom_sf"/>
</dbReference>
<dbReference type="InterPro" id="IPR019775">
    <property type="entry name" value="WD40_repeat_CS"/>
</dbReference>
<dbReference type="InterPro" id="IPR036322">
    <property type="entry name" value="WD40_repeat_dom_sf"/>
</dbReference>
<dbReference type="InterPro" id="IPR001680">
    <property type="entry name" value="WD40_rpt"/>
</dbReference>
<dbReference type="InterPro" id="IPR028599">
    <property type="entry name" value="WDR12/Ytm1"/>
</dbReference>
<dbReference type="PANTHER" id="PTHR19855:SF11">
    <property type="entry name" value="RIBOSOME BIOGENESIS PROTEIN WDR12"/>
    <property type="match status" value="1"/>
</dbReference>
<dbReference type="PANTHER" id="PTHR19855">
    <property type="entry name" value="WD40 REPEAT PROTEIN 12, 37"/>
    <property type="match status" value="1"/>
</dbReference>
<dbReference type="Pfam" id="PF08154">
    <property type="entry name" value="NLE"/>
    <property type="match status" value="1"/>
</dbReference>
<dbReference type="Pfam" id="PF00400">
    <property type="entry name" value="WD40"/>
    <property type="match status" value="4"/>
</dbReference>
<dbReference type="PRINTS" id="PR00320">
    <property type="entry name" value="GPROTEINBRPT"/>
</dbReference>
<dbReference type="SMART" id="SM00320">
    <property type="entry name" value="WD40"/>
    <property type="match status" value="7"/>
</dbReference>
<dbReference type="SUPFAM" id="SSF50978">
    <property type="entry name" value="WD40 repeat-like"/>
    <property type="match status" value="1"/>
</dbReference>
<dbReference type="PROSITE" id="PS00678">
    <property type="entry name" value="WD_REPEATS_1"/>
    <property type="match status" value="2"/>
</dbReference>
<dbReference type="PROSITE" id="PS50082">
    <property type="entry name" value="WD_REPEATS_2"/>
    <property type="match status" value="3"/>
</dbReference>
<dbReference type="PROSITE" id="PS50294">
    <property type="entry name" value="WD_REPEATS_REGION"/>
    <property type="match status" value="1"/>
</dbReference>
<gene>
    <name evidence="1" type="primary">YTM1</name>
    <name type="ordered locus">Pa_2_5840</name>
    <name type="ORF">PODANS_2_5840</name>
</gene>
<keyword id="KW-0539">Nucleus</keyword>
<keyword id="KW-1185">Reference proteome</keyword>
<keyword id="KW-0677">Repeat</keyword>
<keyword id="KW-0690">Ribosome biogenesis</keyword>
<keyword id="KW-0698">rRNA processing</keyword>
<keyword id="KW-0853">WD repeat</keyword>
<accession>B2B5V0</accession>
<accession>A0A090D5C7</accession>
<proteinExistence type="inferred from homology"/>
<feature type="chain" id="PRO_0000369599" description="Ribosome biogenesis protein YTM1">
    <location>
        <begin position="1"/>
        <end position="487"/>
    </location>
</feature>
<feature type="repeat" description="WD 1">
    <location>
        <begin position="122"/>
        <end position="161"/>
    </location>
</feature>
<feature type="repeat" description="WD 2">
    <location>
        <begin position="168"/>
        <end position="206"/>
    </location>
</feature>
<feature type="repeat" description="WD 3">
    <location>
        <begin position="217"/>
        <end position="256"/>
    </location>
</feature>
<feature type="repeat" description="WD 4">
    <location>
        <begin position="379"/>
        <end position="419"/>
    </location>
</feature>
<feature type="repeat" description="WD 5">
    <location>
        <begin position="451"/>
        <end position="487"/>
    </location>
</feature>
<feature type="region of interest" description="Ubiquitin-like (UBL) domain" evidence="1">
    <location>
        <begin position="13"/>
        <end position="95"/>
    </location>
</feature>
<feature type="region of interest" description="Disordered" evidence="2">
    <location>
        <begin position="253"/>
        <end position="277"/>
    </location>
</feature>
<feature type="sequence conflict" description="In Ref. 1; CAP73175." evidence="3" ref="1">
    <original>A</original>
    <variation>P</variation>
    <location>
        <position position="294"/>
    </location>
</feature>
<feature type="sequence conflict" description="In Ref. 1; CAP73175." evidence="3" ref="1">
    <original>V</original>
    <variation>F</variation>
    <location>
        <position position="298"/>
    </location>
</feature>
<feature type="sequence conflict" description="In Ref. 1; CAP73175." evidence="3" ref="1">
    <original>D</original>
    <variation>Y</variation>
    <location>
        <position position="300"/>
    </location>
</feature>
<organism>
    <name type="scientific">Podospora anserina (strain S / ATCC MYA-4624 / DSM 980 / FGSC 10383)</name>
    <name type="common">Pleurage anserina</name>
    <dbReference type="NCBI Taxonomy" id="515849"/>
    <lineage>
        <taxon>Eukaryota</taxon>
        <taxon>Fungi</taxon>
        <taxon>Dikarya</taxon>
        <taxon>Ascomycota</taxon>
        <taxon>Pezizomycotina</taxon>
        <taxon>Sordariomycetes</taxon>
        <taxon>Sordariomycetidae</taxon>
        <taxon>Sordariales</taxon>
        <taxon>Podosporaceae</taxon>
        <taxon>Podospora</taxon>
        <taxon>Podospora anserina</taxon>
    </lineage>
</organism>